<organism>
    <name type="scientific">Mus musculus</name>
    <name type="common">Mouse</name>
    <dbReference type="NCBI Taxonomy" id="10090"/>
    <lineage>
        <taxon>Eukaryota</taxon>
        <taxon>Metazoa</taxon>
        <taxon>Chordata</taxon>
        <taxon>Craniata</taxon>
        <taxon>Vertebrata</taxon>
        <taxon>Euteleostomi</taxon>
        <taxon>Mammalia</taxon>
        <taxon>Eutheria</taxon>
        <taxon>Euarchontoglires</taxon>
        <taxon>Glires</taxon>
        <taxon>Rodentia</taxon>
        <taxon>Myomorpha</taxon>
        <taxon>Muroidea</taxon>
        <taxon>Muridae</taxon>
        <taxon>Murinae</taxon>
        <taxon>Mus</taxon>
        <taxon>Mus</taxon>
    </lineage>
</organism>
<gene>
    <name type="primary">Otp</name>
</gene>
<name>OTP_MOUSE</name>
<feature type="chain" id="PRO_0000049204" description="Homeobox protein orthopedia">
    <location>
        <begin position="1"/>
        <end position="325"/>
    </location>
</feature>
<feature type="DNA-binding region" description="Homeobox" evidence="1">
    <location>
        <begin position="104"/>
        <end position="163"/>
    </location>
</feature>
<feature type="region of interest" description="Disordered" evidence="3">
    <location>
        <begin position="32"/>
        <end position="112"/>
    </location>
</feature>
<feature type="short sequence motif" description="OAR" evidence="2">
    <location>
        <begin position="306"/>
        <end position="319"/>
    </location>
</feature>
<feature type="compositionally biased region" description="Gly residues" evidence="3">
    <location>
        <begin position="32"/>
        <end position="42"/>
    </location>
</feature>
<feature type="compositionally biased region" description="Low complexity" evidence="3">
    <location>
        <begin position="90"/>
        <end position="102"/>
    </location>
</feature>
<reference key="1">
    <citation type="journal article" date="1994" name="Neuron">
        <title>Orthopedia, a novel homeobox-containing gene expressed in the developing CNS of both mouse and Drosophila.</title>
        <authorList>
            <person name="Simeone A."/>
            <person name="D'Apice M.R."/>
            <person name="Nigro V."/>
            <person name="Casanova J."/>
            <person name="Graziani F."/>
            <person name="Acampora D."/>
            <person name="Avantaggiato V."/>
        </authorList>
    </citation>
    <scope>NUCLEOTIDE SEQUENCE [MRNA]</scope>
    <scope>DEVELOPMENTAL STAGE</scope>
    <scope>TISSUE SPECIFICITY</scope>
    <scope>FUNCTION</scope>
    <source>
        <strain>BALB/cJ</strain>
        <tissue>Embryo</tissue>
    </source>
</reference>
<reference key="2">
    <citation type="journal article" date="1999" name="Genes Dev.">
        <title>Progressive impairment of developing neuroendocrine cell lineages in the hypothalamus of mice lacking the Orthopedia gene.</title>
        <authorList>
            <person name="Acampora D."/>
            <person name="Postiglione M.P."/>
            <person name="Avantaggiato V."/>
            <person name="Di Bonito M."/>
            <person name="Vaccarino F.M."/>
            <person name="Michaud J."/>
            <person name="Simeone A."/>
        </authorList>
    </citation>
    <scope>FUNCTION</scope>
    <scope>DISRUPTION PHENOTYPE</scope>
</reference>
<reference key="3">
    <citation type="journal article" date="2000" name="Dev. Biol.">
        <title>The murine Otp homeobox gene plays an essential role in the specification of neuronal cell lineages in the developing hypothalamus.</title>
        <authorList>
            <person name="Wang W."/>
            <person name="Lufkin T."/>
        </authorList>
    </citation>
    <scope>FUNCTION</scope>
</reference>
<reference key="4">
    <citation type="journal article" date="2007" name="Curr. Biol.">
        <title>Orthopedia homeodomain protein is essential for diencephalic dopaminergic neuron development.</title>
        <authorList>
            <person name="Ryu S."/>
            <person name="Mahler J."/>
            <person name="Acampora D."/>
            <person name="Holzschuh J."/>
            <person name="Erhardt S."/>
            <person name="Omodei D."/>
            <person name="Simeone A."/>
            <person name="Driever W."/>
        </authorList>
    </citation>
    <scope>FUNCTION</scope>
</reference>
<dbReference type="EMBL" id="Y10413">
    <property type="protein sequence ID" value="CAA71439.1"/>
    <property type="molecule type" value="mRNA"/>
</dbReference>
<dbReference type="CCDS" id="CCDS26695.1"/>
<dbReference type="RefSeq" id="NP_035151.1">
    <property type="nucleotide sequence ID" value="NM_011021.5"/>
</dbReference>
<dbReference type="SMR" id="O09113"/>
<dbReference type="FunCoup" id="O09113">
    <property type="interactions" value="892"/>
</dbReference>
<dbReference type="STRING" id="10090.ENSMUSP00000022195"/>
<dbReference type="GlyGen" id="O09113">
    <property type="glycosylation" value="2 sites"/>
</dbReference>
<dbReference type="PhosphoSitePlus" id="O09113"/>
<dbReference type="PaxDb" id="10090-ENSMUSP00000022195"/>
<dbReference type="ProteomicsDB" id="294132"/>
<dbReference type="Antibodypedia" id="12584">
    <property type="antibodies" value="142 antibodies from 23 providers"/>
</dbReference>
<dbReference type="DNASU" id="18420"/>
<dbReference type="Ensembl" id="ENSMUST00000022195.13">
    <property type="protein sequence ID" value="ENSMUSP00000022195.10"/>
    <property type="gene ID" value="ENSMUSG00000021685.13"/>
</dbReference>
<dbReference type="GeneID" id="18420"/>
<dbReference type="KEGG" id="mmu:18420"/>
<dbReference type="UCSC" id="uc007rly.1">
    <property type="organism name" value="mouse"/>
</dbReference>
<dbReference type="AGR" id="MGI:99835"/>
<dbReference type="CTD" id="23440"/>
<dbReference type="MGI" id="MGI:99835">
    <property type="gene designation" value="Otp"/>
</dbReference>
<dbReference type="VEuPathDB" id="HostDB:ENSMUSG00000021685"/>
<dbReference type="eggNOG" id="KOG0490">
    <property type="taxonomic scope" value="Eukaryota"/>
</dbReference>
<dbReference type="GeneTree" id="ENSGT00940000159952"/>
<dbReference type="HOGENOM" id="CLU_056068_0_0_1"/>
<dbReference type="InParanoid" id="O09113"/>
<dbReference type="OMA" id="MLPGEDI"/>
<dbReference type="OrthoDB" id="6159439at2759"/>
<dbReference type="PhylomeDB" id="O09113"/>
<dbReference type="TreeFam" id="TF351614"/>
<dbReference type="BioGRID-ORCS" id="18420">
    <property type="hits" value="1 hit in 77 CRISPR screens"/>
</dbReference>
<dbReference type="PRO" id="PR:O09113"/>
<dbReference type="Proteomes" id="UP000000589">
    <property type="component" value="Chromosome 13"/>
</dbReference>
<dbReference type="RNAct" id="O09113">
    <property type="molecule type" value="protein"/>
</dbReference>
<dbReference type="Bgee" id="ENSMUSG00000021685">
    <property type="expression patterns" value="Expressed in median eminence of neurohypophysis and 90 other cell types or tissues"/>
</dbReference>
<dbReference type="GO" id="GO:0001650">
    <property type="term" value="C:fibrillar center"/>
    <property type="evidence" value="ECO:0007669"/>
    <property type="project" value="Ensembl"/>
</dbReference>
<dbReference type="GO" id="GO:0016604">
    <property type="term" value="C:nuclear body"/>
    <property type="evidence" value="ECO:0007669"/>
    <property type="project" value="Ensembl"/>
</dbReference>
<dbReference type="GO" id="GO:0001227">
    <property type="term" value="F:DNA-binding transcription repressor activity, RNA polymerase II-specific"/>
    <property type="evidence" value="ECO:0007669"/>
    <property type="project" value="Ensembl"/>
</dbReference>
<dbReference type="GO" id="GO:0000977">
    <property type="term" value="F:RNA polymerase II transcription regulatory region sequence-specific DNA binding"/>
    <property type="evidence" value="ECO:0007669"/>
    <property type="project" value="Ensembl"/>
</dbReference>
<dbReference type="GO" id="GO:0071542">
    <property type="term" value="P:dopaminergic neuron differentiation"/>
    <property type="evidence" value="ECO:0000315"/>
    <property type="project" value="MGI"/>
</dbReference>
<dbReference type="GO" id="GO:0021879">
    <property type="term" value="P:forebrain neuron differentiation"/>
    <property type="evidence" value="ECO:0000315"/>
    <property type="project" value="MGI"/>
</dbReference>
<dbReference type="GO" id="GO:0021979">
    <property type="term" value="P:hypothalamus cell differentiation"/>
    <property type="evidence" value="ECO:0000315"/>
    <property type="project" value="MGI"/>
</dbReference>
<dbReference type="GO" id="GO:0007405">
    <property type="term" value="P:neuroblast proliferation"/>
    <property type="evidence" value="ECO:0000315"/>
    <property type="project" value="MGI"/>
</dbReference>
<dbReference type="GO" id="GO:0061101">
    <property type="term" value="P:neuroendocrine cell differentiation"/>
    <property type="evidence" value="ECO:0000315"/>
    <property type="project" value="MGI"/>
</dbReference>
<dbReference type="GO" id="GO:0021985">
    <property type="term" value="P:neurohypophysis development"/>
    <property type="evidence" value="ECO:0000315"/>
    <property type="project" value="MGI"/>
</dbReference>
<dbReference type="GO" id="GO:0002052">
    <property type="term" value="P:positive regulation of neuroblast proliferation"/>
    <property type="evidence" value="ECO:0000315"/>
    <property type="project" value="MGI"/>
</dbReference>
<dbReference type="CDD" id="cd00086">
    <property type="entry name" value="homeodomain"/>
    <property type="match status" value="1"/>
</dbReference>
<dbReference type="FunFam" id="1.10.10.60:FF:000124">
    <property type="entry name" value="Orthopedia homeobox b"/>
    <property type="match status" value="1"/>
</dbReference>
<dbReference type="Gene3D" id="1.10.10.60">
    <property type="entry name" value="Homeodomain-like"/>
    <property type="match status" value="1"/>
</dbReference>
<dbReference type="InterPro" id="IPR001356">
    <property type="entry name" value="HD"/>
</dbReference>
<dbReference type="InterPro" id="IPR017970">
    <property type="entry name" value="Homeobox_CS"/>
</dbReference>
<dbReference type="InterPro" id="IPR009057">
    <property type="entry name" value="Homeodomain-like_sf"/>
</dbReference>
<dbReference type="InterPro" id="IPR000047">
    <property type="entry name" value="HTH_motif"/>
</dbReference>
<dbReference type="InterPro" id="IPR003654">
    <property type="entry name" value="OAR_dom"/>
</dbReference>
<dbReference type="InterPro" id="IPR051895">
    <property type="entry name" value="OTP_Homeobox"/>
</dbReference>
<dbReference type="PANTHER" id="PTHR46770">
    <property type="entry name" value="HOMEOBOX PROTEIN ORTHOPEDIA"/>
    <property type="match status" value="1"/>
</dbReference>
<dbReference type="PANTHER" id="PTHR46770:SF1">
    <property type="entry name" value="HOMEOBOX PROTEIN ORTHOPEDIA"/>
    <property type="match status" value="1"/>
</dbReference>
<dbReference type="Pfam" id="PF00046">
    <property type="entry name" value="Homeodomain"/>
    <property type="match status" value="1"/>
</dbReference>
<dbReference type="Pfam" id="PF03826">
    <property type="entry name" value="OAR"/>
    <property type="match status" value="1"/>
</dbReference>
<dbReference type="PRINTS" id="PR00031">
    <property type="entry name" value="HTHREPRESSR"/>
</dbReference>
<dbReference type="SMART" id="SM00389">
    <property type="entry name" value="HOX"/>
    <property type="match status" value="1"/>
</dbReference>
<dbReference type="SUPFAM" id="SSF46689">
    <property type="entry name" value="Homeodomain-like"/>
    <property type="match status" value="1"/>
</dbReference>
<dbReference type="PROSITE" id="PS00027">
    <property type="entry name" value="HOMEOBOX_1"/>
    <property type="match status" value="1"/>
</dbReference>
<dbReference type="PROSITE" id="PS50071">
    <property type="entry name" value="HOMEOBOX_2"/>
    <property type="match status" value="1"/>
</dbReference>
<dbReference type="PROSITE" id="PS50803">
    <property type="entry name" value="OAR"/>
    <property type="match status" value="1"/>
</dbReference>
<evidence type="ECO:0000255" key="1">
    <source>
        <dbReference type="PROSITE-ProRule" id="PRU00108"/>
    </source>
</evidence>
<evidence type="ECO:0000255" key="2">
    <source>
        <dbReference type="PROSITE-ProRule" id="PRU00138"/>
    </source>
</evidence>
<evidence type="ECO:0000256" key="3">
    <source>
        <dbReference type="SAM" id="MobiDB-lite"/>
    </source>
</evidence>
<evidence type="ECO:0000269" key="4">
    <source>
    </source>
</evidence>
<evidence type="ECO:0000269" key="5">
    <source>
    </source>
</evidence>
<evidence type="ECO:0000269" key="6">
    <source>
    </source>
</evidence>
<evidence type="ECO:0000269" key="7">
    <source>
    </source>
</evidence>
<evidence type="ECO:0000305" key="8"/>
<accession>O09113</accession>
<protein>
    <recommendedName>
        <fullName>Homeobox protein orthopedia</fullName>
    </recommendedName>
</protein>
<proteinExistence type="evidence at transcript level"/>
<comment type="function">
    <text evidence="4 5 6 7">Involved in the specification of hypothalamic neuroendocrine cells. Specifically required for the specification of diencephalic dopaminergic neurons of the A11 group.</text>
</comment>
<comment type="subcellular location">
    <subcellularLocation>
        <location evidence="1 2">Nucleus</location>
    </subcellularLocation>
</comment>
<comment type="tissue specificity">
    <text evidence="7">Restricted regions of the developing forebrain, hindbrain, and spinal cord.</text>
</comment>
<comment type="developmental stage">
    <text evidence="7">First detected at 9.5 dpc in restricted domains of the developing diencephalon and along all the hindbrain and the spinal cord. At 10 dpc, found in the medioventral region of the developing spinal cord. At 12.5 dpc, expressed in restricted zones in the preoptic, postoptic and dorsoposterior regions. At later stages, in the intermedial region of the lateral horn, in the optic tract, the presumptive stria terminalis, the amygdaloid complex of the lateral horn in the spinal cord.</text>
</comment>
<comment type="disruption phenotype">
    <text evidence="4">Death at birth or within the first 2 postnatal days due to defects in neuroendocrine hypothalamus differentiation.</text>
</comment>
<comment type="similarity">
    <text evidence="8">Belongs to the paired homeobox family. Bicoid subfamily.</text>
</comment>
<sequence>MLSHADLLDARLGMKDAAELLGHREAVKCRLGVGGSDPGGHPGDLAPNSDPVEGATLLPGEDITTVGSTPASLAVSAKDPDKQPGPQGGPNPSQAGQQQGQQKQKRHRTRFTPAQLNELERSFAKTHYPDIFMREELALRIGLTESRVQVWFQNRRAKWKKRKKTTNVFRAPGTLLPTPGLPQFPSAAAAAAAAMGDSLCSFHANDTRWAAAAMPGVSQLPLPPALGRQQAMAQSLSQCSLAAGPPPNSMGLSNSLAGSNGAGLQSHLYQPAFPGMVPASLPGPSNVSGSPQLCSSPDSSDVWRGTSIASLRRKALEHTVSMSFT</sequence>
<keyword id="KW-0217">Developmental protein</keyword>
<keyword id="KW-0221">Differentiation</keyword>
<keyword id="KW-0238">DNA-binding</keyword>
<keyword id="KW-0371">Homeobox</keyword>
<keyword id="KW-0524">Neurogenesis</keyword>
<keyword id="KW-0539">Nucleus</keyword>
<keyword id="KW-1185">Reference proteome</keyword>
<keyword id="KW-0804">Transcription</keyword>
<keyword id="KW-0805">Transcription regulation</keyword>